<feature type="chain" id="PRO_0000098498" description="Isoleucine--tRNA ligase">
    <location>
        <begin position="1"/>
        <end position="952"/>
    </location>
</feature>
<feature type="short sequence motif" description="'HIGH' region">
    <location>
        <begin position="58"/>
        <end position="68"/>
    </location>
</feature>
<feature type="short sequence motif" description="'KMSKS' region">
    <location>
        <begin position="617"/>
        <end position="621"/>
    </location>
</feature>
<feature type="binding site" evidence="1">
    <location>
        <position position="576"/>
    </location>
    <ligand>
        <name>L-isoleucyl-5'-AMP</name>
        <dbReference type="ChEBI" id="CHEBI:178002"/>
    </ligand>
</feature>
<feature type="binding site" evidence="1">
    <location>
        <position position="620"/>
    </location>
    <ligand>
        <name>ATP</name>
        <dbReference type="ChEBI" id="CHEBI:30616"/>
    </ligand>
</feature>
<feature type="binding site" evidence="1">
    <location>
        <position position="915"/>
    </location>
    <ligand>
        <name>Zn(2+)</name>
        <dbReference type="ChEBI" id="CHEBI:29105"/>
    </ligand>
</feature>
<feature type="binding site" evidence="1">
    <location>
        <position position="918"/>
    </location>
    <ligand>
        <name>Zn(2+)</name>
        <dbReference type="ChEBI" id="CHEBI:29105"/>
    </ligand>
</feature>
<feature type="binding site" evidence="1">
    <location>
        <position position="935"/>
    </location>
    <ligand>
        <name>Zn(2+)</name>
        <dbReference type="ChEBI" id="CHEBI:29105"/>
    </ligand>
</feature>
<feature type="binding site" evidence="1">
    <location>
        <position position="938"/>
    </location>
    <ligand>
        <name>Zn(2+)</name>
        <dbReference type="ChEBI" id="CHEBI:29105"/>
    </ligand>
</feature>
<proteinExistence type="inferred from homology"/>
<name>SYI_ALIF1</name>
<protein>
    <recommendedName>
        <fullName evidence="1">Isoleucine--tRNA ligase</fullName>
        <ecNumber evidence="1">6.1.1.5</ecNumber>
    </recommendedName>
    <alternativeName>
        <fullName evidence="1">Isoleucyl-tRNA synthetase</fullName>
        <shortName evidence="1">IleRS</shortName>
    </alternativeName>
</protein>
<accession>Q5E7N4</accession>
<comment type="function">
    <text evidence="1">Catalyzes the attachment of isoleucine to tRNA(Ile). As IleRS can inadvertently accommodate and process structurally similar amino acids such as valine, to avoid such errors it has two additional distinct tRNA(Ile)-dependent editing activities. One activity is designated as 'pretransfer' editing and involves the hydrolysis of activated Val-AMP. The other activity is designated 'posttransfer' editing and involves deacylation of mischarged Val-tRNA(Ile).</text>
</comment>
<comment type="catalytic activity">
    <reaction evidence="1">
        <text>tRNA(Ile) + L-isoleucine + ATP = L-isoleucyl-tRNA(Ile) + AMP + diphosphate</text>
        <dbReference type="Rhea" id="RHEA:11060"/>
        <dbReference type="Rhea" id="RHEA-COMP:9666"/>
        <dbReference type="Rhea" id="RHEA-COMP:9695"/>
        <dbReference type="ChEBI" id="CHEBI:30616"/>
        <dbReference type="ChEBI" id="CHEBI:33019"/>
        <dbReference type="ChEBI" id="CHEBI:58045"/>
        <dbReference type="ChEBI" id="CHEBI:78442"/>
        <dbReference type="ChEBI" id="CHEBI:78528"/>
        <dbReference type="ChEBI" id="CHEBI:456215"/>
        <dbReference type="EC" id="6.1.1.5"/>
    </reaction>
</comment>
<comment type="cofactor">
    <cofactor evidence="1">
        <name>Zn(2+)</name>
        <dbReference type="ChEBI" id="CHEBI:29105"/>
    </cofactor>
    <text evidence="1">Binds 1 zinc ion per subunit.</text>
</comment>
<comment type="subunit">
    <text evidence="1">Monomer.</text>
</comment>
<comment type="subcellular location">
    <subcellularLocation>
        <location evidence="1">Cytoplasm</location>
    </subcellularLocation>
</comment>
<comment type="domain">
    <text evidence="1">IleRS has two distinct active sites: one for aminoacylation and one for editing. The misactivated valine is translocated from the active site to the editing site, which sterically excludes the correctly activated isoleucine. The single editing site contains two valyl binding pockets, one specific for each substrate (Val-AMP or Val-tRNA(Ile)).</text>
</comment>
<comment type="similarity">
    <text evidence="1">Belongs to the class-I aminoacyl-tRNA synthetase family. IleS type 1 subfamily.</text>
</comment>
<reference key="1">
    <citation type="journal article" date="2005" name="Proc. Natl. Acad. Sci. U.S.A.">
        <title>Complete genome sequence of Vibrio fischeri: a symbiotic bacterium with pathogenic congeners.</title>
        <authorList>
            <person name="Ruby E.G."/>
            <person name="Urbanowski M."/>
            <person name="Campbell J."/>
            <person name="Dunn A."/>
            <person name="Faini M."/>
            <person name="Gunsalus R."/>
            <person name="Lostroh P."/>
            <person name="Lupp C."/>
            <person name="McCann J."/>
            <person name="Millikan D."/>
            <person name="Schaefer A."/>
            <person name="Stabb E."/>
            <person name="Stevens A."/>
            <person name="Visick K."/>
            <person name="Whistler C."/>
            <person name="Greenberg E.P."/>
        </authorList>
    </citation>
    <scope>NUCLEOTIDE SEQUENCE [LARGE SCALE GENOMIC DNA]</scope>
    <source>
        <strain>ATCC 700601 / ES114</strain>
    </source>
</reference>
<dbReference type="EC" id="6.1.1.5" evidence="1"/>
<dbReference type="EMBL" id="CP000020">
    <property type="protein sequence ID" value="AAW84962.1"/>
    <property type="molecule type" value="Genomic_DNA"/>
</dbReference>
<dbReference type="RefSeq" id="WP_005417642.1">
    <property type="nucleotide sequence ID" value="NC_006840.2"/>
</dbReference>
<dbReference type="RefSeq" id="YP_203850.1">
    <property type="nucleotide sequence ID" value="NC_006840.2"/>
</dbReference>
<dbReference type="SMR" id="Q5E7N4"/>
<dbReference type="STRING" id="312309.VF_0467"/>
<dbReference type="EnsemblBacteria" id="AAW84962">
    <property type="protein sequence ID" value="AAW84962"/>
    <property type="gene ID" value="VF_0467"/>
</dbReference>
<dbReference type="GeneID" id="54163103"/>
<dbReference type="KEGG" id="vfi:VF_0467"/>
<dbReference type="PATRIC" id="fig|312309.11.peg.457"/>
<dbReference type="eggNOG" id="COG0060">
    <property type="taxonomic scope" value="Bacteria"/>
</dbReference>
<dbReference type="HOGENOM" id="CLU_001493_7_0_6"/>
<dbReference type="OrthoDB" id="9810365at2"/>
<dbReference type="Proteomes" id="UP000000537">
    <property type="component" value="Chromosome I"/>
</dbReference>
<dbReference type="GO" id="GO:0005829">
    <property type="term" value="C:cytosol"/>
    <property type="evidence" value="ECO:0007669"/>
    <property type="project" value="TreeGrafter"/>
</dbReference>
<dbReference type="GO" id="GO:0002161">
    <property type="term" value="F:aminoacyl-tRNA deacylase activity"/>
    <property type="evidence" value="ECO:0007669"/>
    <property type="project" value="InterPro"/>
</dbReference>
<dbReference type="GO" id="GO:0005524">
    <property type="term" value="F:ATP binding"/>
    <property type="evidence" value="ECO:0007669"/>
    <property type="project" value="UniProtKB-UniRule"/>
</dbReference>
<dbReference type="GO" id="GO:0004822">
    <property type="term" value="F:isoleucine-tRNA ligase activity"/>
    <property type="evidence" value="ECO:0007669"/>
    <property type="project" value="UniProtKB-UniRule"/>
</dbReference>
<dbReference type="GO" id="GO:0000049">
    <property type="term" value="F:tRNA binding"/>
    <property type="evidence" value="ECO:0007669"/>
    <property type="project" value="InterPro"/>
</dbReference>
<dbReference type="GO" id="GO:0008270">
    <property type="term" value="F:zinc ion binding"/>
    <property type="evidence" value="ECO:0007669"/>
    <property type="project" value="UniProtKB-UniRule"/>
</dbReference>
<dbReference type="GO" id="GO:0006428">
    <property type="term" value="P:isoleucyl-tRNA aminoacylation"/>
    <property type="evidence" value="ECO:0007669"/>
    <property type="project" value="UniProtKB-UniRule"/>
</dbReference>
<dbReference type="CDD" id="cd07960">
    <property type="entry name" value="Anticodon_Ia_Ile_BEm"/>
    <property type="match status" value="1"/>
</dbReference>
<dbReference type="CDD" id="cd00818">
    <property type="entry name" value="IleRS_core"/>
    <property type="match status" value="1"/>
</dbReference>
<dbReference type="FunFam" id="1.10.730.20:FF:000001">
    <property type="entry name" value="Isoleucine--tRNA ligase"/>
    <property type="match status" value="1"/>
</dbReference>
<dbReference type="FunFam" id="3.40.50.620:FF:000048">
    <property type="entry name" value="Isoleucine--tRNA ligase"/>
    <property type="match status" value="1"/>
</dbReference>
<dbReference type="FunFam" id="3.40.50.620:FF:000168">
    <property type="entry name" value="Isoleucine--tRNA ligase"/>
    <property type="match status" value="1"/>
</dbReference>
<dbReference type="Gene3D" id="1.10.730.20">
    <property type="match status" value="1"/>
</dbReference>
<dbReference type="Gene3D" id="3.40.50.620">
    <property type="entry name" value="HUPs"/>
    <property type="match status" value="2"/>
</dbReference>
<dbReference type="Gene3D" id="3.90.740.10">
    <property type="entry name" value="Valyl/Leucyl/Isoleucyl-tRNA synthetase, editing domain"/>
    <property type="match status" value="1"/>
</dbReference>
<dbReference type="HAMAP" id="MF_02002">
    <property type="entry name" value="Ile_tRNA_synth_type1"/>
    <property type="match status" value="1"/>
</dbReference>
<dbReference type="InterPro" id="IPR001412">
    <property type="entry name" value="aa-tRNA-synth_I_CS"/>
</dbReference>
<dbReference type="InterPro" id="IPR002300">
    <property type="entry name" value="aa-tRNA-synth_Ia"/>
</dbReference>
<dbReference type="InterPro" id="IPR033708">
    <property type="entry name" value="Anticodon_Ile_BEm"/>
</dbReference>
<dbReference type="InterPro" id="IPR002301">
    <property type="entry name" value="Ile-tRNA-ligase"/>
</dbReference>
<dbReference type="InterPro" id="IPR023585">
    <property type="entry name" value="Ile-tRNA-ligase_type1"/>
</dbReference>
<dbReference type="InterPro" id="IPR050081">
    <property type="entry name" value="Ile-tRNA_ligase"/>
</dbReference>
<dbReference type="InterPro" id="IPR013155">
    <property type="entry name" value="M/V/L/I-tRNA-synth_anticd-bd"/>
</dbReference>
<dbReference type="InterPro" id="IPR014729">
    <property type="entry name" value="Rossmann-like_a/b/a_fold"/>
</dbReference>
<dbReference type="InterPro" id="IPR009080">
    <property type="entry name" value="tRNAsynth_Ia_anticodon-bd"/>
</dbReference>
<dbReference type="InterPro" id="IPR009008">
    <property type="entry name" value="Val/Leu/Ile-tRNA-synth_edit"/>
</dbReference>
<dbReference type="InterPro" id="IPR010663">
    <property type="entry name" value="Znf_FPG/IleRS"/>
</dbReference>
<dbReference type="NCBIfam" id="TIGR00392">
    <property type="entry name" value="ileS"/>
    <property type="match status" value="1"/>
</dbReference>
<dbReference type="PANTHER" id="PTHR42765:SF1">
    <property type="entry name" value="ISOLEUCINE--TRNA LIGASE, MITOCHONDRIAL"/>
    <property type="match status" value="1"/>
</dbReference>
<dbReference type="PANTHER" id="PTHR42765">
    <property type="entry name" value="SOLEUCYL-TRNA SYNTHETASE"/>
    <property type="match status" value="1"/>
</dbReference>
<dbReference type="Pfam" id="PF08264">
    <property type="entry name" value="Anticodon_1"/>
    <property type="match status" value="1"/>
</dbReference>
<dbReference type="Pfam" id="PF00133">
    <property type="entry name" value="tRNA-synt_1"/>
    <property type="match status" value="1"/>
</dbReference>
<dbReference type="Pfam" id="PF06827">
    <property type="entry name" value="zf-FPG_IleRS"/>
    <property type="match status" value="1"/>
</dbReference>
<dbReference type="PRINTS" id="PR00984">
    <property type="entry name" value="TRNASYNTHILE"/>
</dbReference>
<dbReference type="SUPFAM" id="SSF47323">
    <property type="entry name" value="Anticodon-binding domain of a subclass of class I aminoacyl-tRNA synthetases"/>
    <property type="match status" value="1"/>
</dbReference>
<dbReference type="SUPFAM" id="SSF52374">
    <property type="entry name" value="Nucleotidylyl transferase"/>
    <property type="match status" value="1"/>
</dbReference>
<dbReference type="SUPFAM" id="SSF50677">
    <property type="entry name" value="ValRS/IleRS/LeuRS editing domain"/>
    <property type="match status" value="1"/>
</dbReference>
<dbReference type="PROSITE" id="PS00178">
    <property type="entry name" value="AA_TRNA_LIGASE_I"/>
    <property type="match status" value="1"/>
</dbReference>
<sequence>MSDYKDTLNLPETGFPMRGNLANREPEMLKRWYDEDLYGEIRKAKKGKKSFVLHDGPPYANGDIHIGHALNKILKDIIIKSKTLSGFDAPYVPGWDCHGLPIELMVEKKKGKPGQKISAAEFREECRKYAAGQVEGQKESFKRLGVMGEWDKPYRTMDFGTEANIIRSLGKIADQGHLLKGFKPVHWCTDCGSALAEAEVEYQDKVSPSIDVRFVAADEAATLAKFSTPEGHQGEGELSVVIWTTTPWTLPANRAVALHADLEYVLVQVEAHGEQKAQRLILASELAKSVLDRANIEHYHNLGFAKGSDLELLQFNHPFYNFTVPAILGEHVTTDSGTGIVHTAPGHGQEDFVVGKKYDLEIANPVGSNGVYLPDTELFAGQHVFKANDSVLEVLKEKGALLHHHAYEHSYPHCWRHKTPIIFRATPQWFISMDQAGLRAKALEEVKSVEWMPEWGQNRIEGMIEGRPEWCISRQRTWGVPIALFVHKETAELHPDSLELIEKVAKLVEEKGIQAWWDVDAAELMGEEDAANYEKVLDTLDVWFDSGVTHFSVVDSREEYNFPEEERTHSADLYLEGSDQHRGWFQSSLISSVAMKGKAPYRQVLTHGFVVDGNGRKMSKSIGNVVAPKDVTNKLGADILRLWVASTDYTNEVAVSDEILKRSADAYRRIRNTARFFLANLSGFNPATDIVPAEEMVALDRWAVGRAFAAQQEIIKSYDEYNLHEVTQRLMHFCSIEMGSFYLDVIKDRQYTAKKGGHAQRSCQTALYYIVEALVRWMAPIMSFTADEIWNEMPGEREKFVFTGEWYQGLFDLAEGEEFNNEFWTEIQAVRASVNKLLEAARGEKVIGGALQAEVTLYADDALIAKINKLEDELRFVLLTSAATVKPLSEKTESAKATELDGLFVDVAASEAAKCERCWHHVADVGTIEGHEEVCGRCVSNVDGEGEERKFA</sequence>
<evidence type="ECO:0000255" key="1">
    <source>
        <dbReference type="HAMAP-Rule" id="MF_02002"/>
    </source>
</evidence>
<keyword id="KW-0030">Aminoacyl-tRNA synthetase</keyword>
<keyword id="KW-0067">ATP-binding</keyword>
<keyword id="KW-0963">Cytoplasm</keyword>
<keyword id="KW-0436">Ligase</keyword>
<keyword id="KW-0479">Metal-binding</keyword>
<keyword id="KW-0547">Nucleotide-binding</keyword>
<keyword id="KW-0648">Protein biosynthesis</keyword>
<keyword id="KW-1185">Reference proteome</keyword>
<keyword id="KW-0862">Zinc</keyword>
<organism>
    <name type="scientific">Aliivibrio fischeri (strain ATCC 700601 / ES114)</name>
    <name type="common">Vibrio fischeri</name>
    <dbReference type="NCBI Taxonomy" id="312309"/>
    <lineage>
        <taxon>Bacteria</taxon>
        <taxon>Pseudomonadati</taxon>
        <taxon>Pseudomonadota</taxon>
        <taxon>Gammaproteobacteria</taxon>
        <taxon>Vibrionales</taxon>
        <taxon>Vibrionaceae</taxon>
        <taxon>Aliivibrio</taxon>
    </lineage>
</organism>
<gene>
    <name evidence="1" type="primary">ileS</name>
    <name type="ordered locus">VF_0467</name>
</gene>